<dbReference type="EMBL" id="CP001145">
    <property type="protein sequence ID" value="ACI17905.1"/>
    <property type="molecule type" value="Genomic_DNA"/>
</dbReference>
<dbReference type="RefSeq" id="WP_012544556.1">
    <property type="nucleotide sequence ID" value="NC_011295.1"/>
</dbReference>
<dbReference type="SMR" id="B5Y8F5"/>
<dbReference type="STRING" id="309798.COPRO5265_0704"/>
<dbReference type="KEGG" id="cpo:COPRO5265_0704"/>
<dbReference type="eggNOG" id="COG0335">
    <property type="taxonomic scope" value="Bacteria"/>
</dbReference>
<dbReference type="HOGENOM" id="CLU_103507_2_1_9"/>
<dbReference type="OrthoDB" id="9803541at2"/>
<dbReference type="Proteomes" id="UP000001732">
    <property type="component" value="Chromosome"/>
</dbReference>
<dbReference type="GO" id="GO:0022625">
    <property type="term" value="C:cytosolic large ribosomal subunit"/>
    <property type="evidence" value="ECO:0007669"/>
    <property type="project" value="TreeGrafter"/>
</dbReference>
<dbReference type="GO" id="GO:0003735">
    <property type="term" value="F:structural constituent of ribosome"/>
    <property type="evidence" value="ECO:0007669"/>
    <property type="project" value="InterPro"/>
</dbReference>
<dbReference type="GO" id="GO:0006412">
    <property type="term" value="P:translation"/>
    <property type="evidence" value="ECO:0007669"/>
    <property type="project" value="UniProtKB-UniRule"/>
</dbReference>
<dbReference type="Gene3D" id="2.30.30.790">
    <property type="match status" value="1"/>
</dbReference>
<dbReference type="HAMAP" id="MF_00402">
    <property type="entry name" value="Ribosomal_bL19"/>
    <property type="match status" value="1"/>
</dbReference>
<dbReference type="InterPro" id="IPR001857">
    <property type="entry name" value="Ribosomal_bL19"/>
</dbReference>
<dbReference type="InterPro" id="IPR018257">
    <property type="entry name" value="Ribosomal_bL19_CS"/>
</dbReference>
<dbReference type="InterPro" id="IPR038657">
    <property type="entry name" value="Ribosomal_bL19_sf"/>
</dbReference>
<dbReference type="InterPro" id="IPR008991">
    <property type="entry name" value="Translation_prot_SH3-like_sf"/>
</dbReference>
<dbReference type="NCBIfam" id="TIGR01024">
    <property type="entry name" value="rplS_bact"/>
    <property type="match status" value="1"/>
</dbReference>
<dbReference type="PANTHER" id="PTHR15680:SF9">
    <property type="entry name" value="LARGE RIBOSOMAL SUBUNIT PROTEIN BL19M"/>
    <property type="match status" value="1"/>
</dbReference>
<dbReference type="PANTHER" id="PTHR15680">
    <property type="entry name" value="RIBOSOMAL PROTEIN L19"/>
    <property type="match status" value="1"/>
</dbReference>
<dbReference type="Pfam" id="PF01245">
    <property type="entry name" value="Ribosomal_L19"/>
    <property type="match status" value="1"/>
</dbReference>
<dbReference type="PIRSF" id="PIRSF002191">
    <property type="entry name" value="Ribosomal_L19"/>
    <property type="match status" value="1"/>
</dbReference>
<dbReference type="PRINTS" id="PR00061">
    <property type="entry name" value="RIBOSOMALL19"/>
</dbReference>
<dbReference type="SUPFAM" id="SSF50104">
    <property type="entry name" value="Translation proteins SH3-like domain"/>
    <property type="match status" value="1"/>
</dbReference>
<dbReference type="PROSITE" id="PS01015">
    <property type="entry name" value="RIBOSOMAL_L19"/>
    <property type="match status" value="1"/>
</dbReference>
<name>RL19_COPPD</name>
<proteinExistence type="inferred from homology"/>
<gene>
    <name evidence="1" type="primary">rplS</name>
    <name type="ordered locus">COPRO5265_0704</name>
</gene>
<feature type="chain" id="PRO_1000193814" description="Large ribosomal subunit protein bL19">
    <location>
        <begin position="1"/>
        <end position="118"/>
    </location>
</feature>
<sequence>MDIIRRIEQTMMREDVPPVEVGDTVRVKWRFTERDRSGEDKSRVQAYEGIVIAKKGTGISESIVVRKISSGVGVEKTFPLHSPNLVDLEVVTRGKVRRAKLYYLREKKHLVVKKKSRF</sequence>
<accession>B5Y8F5</accession>
<comment type="function">
    <text evidence="1">This protein is located at the 30S-50S ribosomal subunit interface and may play a role in the structure and function of the aminoacyl-tRNA binding site.</text>
</comment>
<comment type="similarity">
    <text evidence="1">Belongs to the bacterial ribosomal protein bL19 family.</text>
</comment>
<organism>
    <name type="scientific">Coprothermobacter proteolyticus (strain ATCC 35245 / DSM 5265 / OCM 4 / BT)</name>
    <dbReference type="NCBI Taxonomy" id="309798"/>
    <lineage>
        <taxon>Bacteria</taxon>
        <taxon>Pseudomonadati</taxon>
        <taxon>Coprothermobacterota</taxon>
        <taxon>Coprothermobacteria</taxon>
        <taxon>Coprothermobacterales</taxon>
        <taxon>Coprothermobacteraceae</taxon>
        <taxon>Coprothermobacter</taxon>
    </lineage>
</organism>
<evidence type="ECO:0000255" key="1">
    <source>
        <dbReference type="HAMAP-Rule" id="MF_00402"/>
    </source>
</evidence>
<evidence type="ECO:0000305" key="2"/>
<keyword id="KW-1185">Reference proteome</keyword>
<keyword id="KW-0687">Ribonucleoprotein</keyword>
<keyword id="KW-0689">Ribosomal protein</keyword>
<reference key="1">
    <citation type="submission" date="2008-08" db="EMBL/GenBank/DDBJ databases">
        <title>The complete genome sequence of Coprothermobacter proteolyticus strain ATCC 5245 / DSM 5265 / BT.</title>
        <authorList>
            <person name="Dodson R.J."/>
            <person name="Durkin A.S."/>
            <person name="Wu M."/>
            <person name="Eisen J."/>
            <person name="Sutton G."/>
        </authorList>
    </citation>
    <scope>NUCLEOTIDE SEQUENCE [LARGE SCALE GENOMIC DNA]</scope>
    <source>
        <strain>ATCC 35245 / DSM 5265 / OCM 4 / BT</strain>
    </source>
</reference>
<protein>
    <recommendedName>
        <fullName evidence="1">Large ribosomal subunit protein bL19</fullName>
    </recommendedName>
    <alternativeName>
        <fullName evidence="2">50S ribosomal protein L19</fullName>
    </alternativeName>
</protein>